<organism>
    <name type="scientific">Streptococcus thermophilus (strain CNRZ 1066)</name>
    <dbReference type="NCBI Taxonomy" id="299768"/>
    <lineage>
        <taxon>Bacteria</taxon>
        <taxon>Bacillati</taxon>
        <taxon>Bacillota</taxon>
        <taxon>Bacilli</taxon>
        <taxon>Lactobacillales</taxon>
        <taxon>Streptococcaceae</taxon>
        <taxon>Streptococcus</taxon>
    </lineage>
</organism>
<name>AROC_STRT1</name>
<feature type="chain" id="PRO_0000140661" description="Chorismate synthase">
    <location>
        <begin position="1"/>
        <end position="388"/>
    </location>
</feature>
<feature type="binding site" evidence="1">
    <location>
        <position position="39"/>
    </location>
    <ligand>
        <name>NADP(+)</name>
        <dbReference type="ChEBI" id="CHEBI:58349"/>
    </ligand>
</feature>
<feature type="binding site" evidence="1">
    <location>
        <position position="45"/>
    </location>
    <ligand>
        <name>NADP(+)</name>
        <dbReference type="ChEBI" id="CHEBI:58349"/>
    </ligand>
</feature>
<feature type="binding site" evidence="1">
    <location>
        <begin position="130"/>
        <end position="132"/>
    </location>
    <ligand>
        <name>FMN</name>
        <dbReference type="ChEBI" id="CHEBI:58210"/>
    </ligand>
</feature>
<feature type="binding site" evidence="1">
    <location>
        <begin position="251"/>
        <end position="252"/>
    </location>
    <ligand>
        <name>FMN</name>
        <dbReference type="ChEBI" id="CHEBI:58210"/>
    </ligand>
</feature>
<feature type="binding site" evidence="1">
    <location>
        <position position="296"/>
    </location>
    <ligand>
        <name>FMN</name>
        <dbReference type="ChEBI" id="CHEBI:58210"/>
    </ligand>
</feature>
<feature type="binding site" evidence="1">
    <location>
        <begin position="311"/>
        <end position="315"/>
    </location>
    <ligand>
        <name>FMN</name>
        <dbReference type="ChEBI" id="CHEBI:58210"/>
    </ligand>
</feature>
<feature type="binding site" evidence="1">
    <location>
        <position position="337"/>
    </location>
    <ligand>
        <name>FMN</name>
        <dbReference type="ChEBI" id="CHEBI:58210"/>
    </ligand>
</feature>
<evidence type="ECO:0000255" key="1">
    <source>
        <dbReference type="HAMAP-Rule" id="MF_00300"/>
    </source>
</evidence>
<keyword id="KW-0028">Amino-acid biosynthesis</keyword>
<keyword id="KW-0057">Aromatic amino acid biosynthesis</keyword>
<keyword id="KW-0274">FAD</keyword>
<keyword id="KW-0285">Flavoprotein</keyword>
<keyword id="KW-0288">FMN</keyword>
<keyword id="KW-0456">Lyase</keyword>
<keyword id="KW-0521">NADP</keyword>
<proteinExistence type="inferred from homology"/>
<comment type="function">
    <text evidence="1">Catalyzes the anti-1,4-elimination of the C-3 phosphate and the C-6 proR hydrogen from 5-enolpyruvylshikimate-3-phosphate (EPSP) to yield chorismate, which is the branch point compound that serves as the starting substrate for the three terminal pathways of aromatic amino acid biosynthesis. This reaction introduces a second double bond into the aromatic ring system.</text>
</comment>
<comment type="catalytic activity">
    <reaction evidence="1">
        <text>5-O-(1-carboxyvinyl)-3-phosphoshikimate = chorismate + phosphate</text>
        <dbReference type="Rhea" id="RHEA:21020"/>
        <dbReference type="ChEBI" id="CHEBI:29748"/>
        <dbReference type="ChEBI" id="CHEBI:43474"/>
        <dbReference type="ChEBI" id="CHEBI:57701"/>
        <dbReference type="EC" id="4.2.3.5"/>
    </reaction>
</comment>
<comment type="cofactor">
    <cofactor evidence="1">
        <name>FMNH2</name>
        <dbReference type="ChEBI" id="CHEBI:57618"/>
    </cofactor>
    <text evidence="1">Reduced FMN (FMNH(2)).</text>
</comment>
<comment type="pathway">
    <text evidence="1">Metabolic intermediate biosynthesis; chorismate biosynthesis; chorismate from D-erythrose 4-phosphate and phosphoenolpyruvate: step 7/7.</text>
</comment>
<comment type="subunit">
    <text evidence="1">Homotetramer.</text>
</comment>
<comment type="similarity">
    <text evidence="1">Belongs to the chorismate synthase family.</text>
</comment>
<protein>
    <recommendedName>
        <fullName evidence="1">Chorismate synthase</fullName>
        <shortName evidence="1">CS</shortName>
        <ecNumber evidence="1">4.2.3.5</ecNumber>
    </recommendedName>
    <alternativeName>
        <fullName evidence="1">5-enolpyruvylshikimate-3-phosphate phospholyase</fullName>
    </alternativeName>
</protein>
<sequence>MRYLTAGESHGPRLTAIIEGVPAGLPLTAEDINGDLKRRQGGYGRGGRMKIESDKVEITSGVRHGKTTGAPITLHVINKDHQKWLDIMAVEDIEDRLKTKRKITHPRPGHADLVGGMKYRFDDLRNSLERSSARETTMRVAVGAVAKRILAELDIEIANHVVVFGGKEIDVPENLTVAQIKELAQQSEISVVNQEREQEIKDYIDQIKKEGDTIGGVVETVVGGVPVGLGSYVQWDTKLDAKIAQAVVSINAFKGVEFGLGFKDGYLRGSQVMDEILWNEEDGYTRRTNNLGGFEGGMTNGQPIVVRGVMKPIPTLYKPLMSVDIETHEPYKATVERSDPTALPAAGVVMESVVATVVANEILDKFSSDNLEELKEAVAHHRDYVKNF</sequence>
<gene>
    <name evidence="1" type="primary">aroC</name>
    <name type="ordered locus">str0641</name>
</gene>
<dbReference type="EC" id="4.2.3.5" evidence="1"/>
<dbReference type="EMBL" id="CP000024">
    <property type="protein sequence ID" value="AAV62237.1"/>
    <property type="molecule type" value="Genomic_DNA"/>
</dbReference>
<dbReference type="RefSeq" id="WP_011225712.1">
    <property type="nucleotide sequence ID" value="NC_006449.1"/>
</dbReference>
<dbReference type="SMR" id="Q5M0L9"/>
<dbReference type="GeneID" id="66898549"/>
<dbReference type="KEGG" id="stc:str0641"/>
<dbReference type="HOGENOM" id="CLU_034547_2_0_9"/>
<dbReference type="UniPathway" id="UPA00053">
    <property type="reaction ID" value="UER00090"/>
</dbReference>
<dbReference type="GO" id="GO:0005829">
    <property type="term" value="C:cytosol"/>
    <property type="evidence" value="ECO:0007669"/>
    <property type="project" value="TreeGrafter"/>
</dbReference>
<dbReference type="GO" id="GO:0004107">
    <property type="term" value="F:chorismate synthase activity"/>
    <property type="evidence" value="ECO:0007669"/>
    <property type="project" value="UniProtKB-UniRule"/>
</dbReference>
<dbReference type="GO" id="GO:0010181">
    <property type="term" value="F:FMN binding"/>
    <property type="evidence" value="ECO:0007669"/>
    <property type="project" value="TreeGrafter"/>
</dbReference>
<dbReference type="GO" id="GO:0008652">
    <property type="term" value="P:amino acid biosynthetic process"/>
    <property type="evidence" value="ECO:0007669"/>
    <property type="project" value="UniProtKB-KW"/>
</dbReference>
<dbReference type="GO" id="GO:0009073">
    <property type="term" value="P:aromatic amino acid family biosynthetic process"/>
    <property type="evidence" value="ECO:0007669"/>
    <property type="project" value="UniProtKB-KW"/>
</dbReference>
<dbReference type="GO" id="GO:0009423">
    <property type="term" value="P:chorismate biosynthetic process"/>
    <property type="evidence" value="ECO:0007669"/>
    <property type="project" value="UniProtKB-UniRule"/>
</dbReference>
<dbReference type="CDD" id="cd07304">
    <property type="entry name" value="Chorismate_synthase"/>
    <property type="match status" value="1"/>
</dbReference>
<dbReference type="FunFam" id="3.60.150.10:FF:000002">
    <property type="entry name" value="Chorismate synthase"/>
    <property type="match status" value="1"/>
</dbReference>
<dbReference type="Gene3D" id="3.60.150.10">
    <property type="entry name" value="Chorismate synthase AroC"/>
    <property type="match status" value="1"/>
</dbReference>
<dbReference type="HAMAP" id="MF_00300">
    <property type="entry name" value="Chorismate_synth"/>
    <property type="match status" value="1"/>
</dbReference>
<dbReference type="InterPro" id="IPR000453">
    <property type="entry name" value="Chorismate_synth"/>
</dbReference>
<dbReference type="InterPro" id="IPR035904">
    <property type="entry name" value="Chorismate_synth_AroC_sf"/>
</dbReference>
<dbReference type="InterPro" id="IPR020541">
    <property type="entry name" value="Chorismate_synthase_CS"/>
</dbReference>
<dbReference type="NCBIfam" id="TIGR00033">
    <property type="entry name" value="aroC"/>
    <property type="match status" value="1"/>
</dbReference>
<dbReference type="NCBIfam" id="NF003793">
    <property type="entry name" value="PRK05382.1"/>
    <property type="match status" value="1"/>
</dbReference>
<dbReference type="PANTHER" id="PTHR21085">
    <property type="entry name" value="CHORISMATE SYNTHASE"/>
    <property type="match status" value="1"/>
</dbReference>
<dbReference type="PANTHER" id="PTHR21085:SF0">
    <property type="entry name" value="CHORISMATE SYNTHASE"/>
    <property type="match status" value="1"/>
</dbReference>
<dbReference type="Pfam" id="PF01264">
    <property type="entry name" value="Chorismate_synt"/>
    <property type="match status" value="1"/>
</dbReference>
<dbReference type="PIRSF" id="PIRSF001456">
    <property type="entry name" value="Chorismate_synth"/>
    <property type="match status" value="1"/>
</dbReference>
<dbReference type="SUPFAM" id="SSF103263">
    <property type="entry name" value="Chorismate synthase, AroC"/>
    <property type="match status" value="1"/>
</dbReference>
<dbReference type="PROSITE" id="PS00787">
    <property type="entry name" value="CHORISMATE_SYNTHASE_1"/>
    <property type="match status" value="1"/>
</dbReference>
<dbReference type="PROSITE" id="PS00788">
    <property type="entry name" value="CHORISMATE_SYNTHASE_2"/>
    <property type="match status" value="1"/>
</dbReference>
<dbReference type="PROSITE" id="PS00789">
    <property type="entry name" value="CHORISMATE_SYNTHASE_3"/>
    <property type="match status" value="1"/>
</dbReference>
<reference key="1">
    <citation type="journal article" date="2004" name="Nat. Biotechnol.">
        <title>Complete sequence and comparative genome analysis of the dairy bacterium Streptococcus thermophilus.</title>
        <authorList>
            <person name="Bolotin A."/>
            <person name="Quinquis B."/>
            <person name="Renault P."/>
            <person name="Sorokin A."/>
            <person name="Ehrlich S.D."/>
            <person name="Kulakauskas S."/>
            <person name="Lapidus A."/>
            <person name="Goltsman E."/>
            <person name="Mazur M."/>
            <person name="Pusch G.D."/>
            <person name="Fonstein M."/>
            <person name="Overbeek R."/>
            <person name="Kyprides N."/>
            <person name="Purnelle B."/>
            <person name="Prozzi D."/>
            <person name="Ngui K."/>
            <person name="Masuy D."/>
            <person name="Hancy F."/>
            <person name="Burteau S."/>
            <person name="Boutry M."/>
            <person name="Delcour J."/>
            <person name="Goffeau A."/>
            <person name="Hols P."/>
        </authorList>
    </citation>
    <scope>NUCLEOTIDE SEQUENCE [LARGE SCALE GENOMIC DNA]</scope>
    <source>
        <strain>CNRZ 1066</strain>
    </source>
</reference>
<accession>Q5M0L9</accession>